<organism>
    <name type="scientific">Escherichia coli (strain SE11)</name>
    <dbReference type="NCBI Taxonomy" id="409438"/>
    <lineage>
        <taxon>Bacteria</taxon>
        <taxon>Pseudomonadati</taxon>
        <taxon>Pseudomonadota</taxon>
        <taxon>Gammaproteobacteria</taxon>
        <taxon>Enterobacterales</taxon>
        <taxon>Enterobacteriaceae</taxon>
        <taxon>Escherichia</taxon>
    </lineage>
</organism>
<proteinExistence type="inferred from homology"/>
<protein>
    <recommendedName>
        <fullName evidence="1">Large ribosomal subunit protein uL24</fullName>
    </recommendedName>
    <alternativeName>
        <fullName evidence="2">50S ribosomal protein L24</fullName>
    </alternativeName>
</protein>
<reference key="1">
    <citation type="journal article" date="2008" name="DNA Res.">
        <title>Complete genome sequence and comparative analysis of the wild-type commensal Escherichia coli strain SE11 isolated from a healthy adult.</title>
        <authorList>
            <person name="Oshima K."/>
            <person name="Toh H."/>
            <person name="Ogura Y."/>
            <person name="Sasamoto H."/>
            <person name="Morita H."/>
            <person name="Park S.-H."/>
            <person name="Ooka T."/>
            <person name="Iyoda S."/>
            <person name="Taylor T.D."/>
            <person name="Hayashi T."/>
            <person name="Itoh K."/>
            <person name="Hattori M."/>
        </authorList>
    </citation>
    <scope>NUCLEOTIDE SEQUENCE [LARGE SCALE GENOMIC DNA]</scope>
    <source>
        <strain>SE11</strain>
    </source>
</reference>
<dbReference type="EMBL" id="AP009240">
    <property type="protein sequence ID" value="BAG79108.1"/>
    <property type="molecule type" value="Genomic_DNA"/>
</dbReference>
<dbReference type="RefSeq" id="WP_000729185.1">
    <property type="nucleotide sequence ID" value="NC_011415.1"/>
</dbReference>
<dbReference type="SMR" id="B6I223"/>
<dbReference type="GeneID" id="93778678"/>
<dbReference type="KEGG" id="ecy:ECSE_3584"/>
<dbReference type="HOGENOM" id="CLU_093315_2_2_6"/>
<dbReference type="Proteomes" id="UP000008199">
    <property type="component" value="Chromosome"/>
</dbReference>
<dbReference type="GO" id="GO:0005829">
    <property type="term" value="C:cytosol"/>
    <property type="evidence" value="ECO:0007669"/>
    <property type="project" value="UniProtKB-ARBA"/>
</dbReference>
<dbReference type="GO" id="GO:1990904">
    <property type="term" value="C:ribonucleoprotein complex"/>
    <property type="evidence" value="ECO:0007669"/>
    <property type="project" value="UniProtKB-KW"/>
</dbReference>
<dbReference type="GO" id="GO:0005840">
    <property type="term" value="C:ribosome"/>
    <property type="evidence" value="ECO:0007669"/>
    <property type="project" value="UniProtKB-KW"/>
</dbReference>
<dbReference type="GO" id="GO:0019843">
    <property type="term" value="F:rRNA binding"/>
    <property type="evidence" value="ECO:0007669"/>
    <property type="project" value="UniProtKB-UniRule"/>
</dbReference>
<dbReference type="GO" id="GO:0003735">
    <property type="term" value="F:structural constituent of ribosome"/>
    <property type="evidence" value="ECO:0007669"/>
    <property type="project" value="InterPro"/>
</dbReference>
<dbReference type="GO" id="GO:0006412">
    <property type="term" value="P:translation"/>
    <property type="evidence" value="ECO:0007669"/>
    <property type="project" value="UniProtKB-UniRule"/>
</dbReference>
<dbReference type="CDD" id="cd06089">
    <property type="entry name" value="KOW_RPL26"/>
    <property type="match status" value="1"/>
</dbReference>
<dbReference type="FunFam" id="2.30.30.30:FF:000004">
    <property type="entry name" value="50S ribosomal protein L24"/>
    <property type="match status" value="1"/>
</dbReference>
<dbReference type="Gene3D" id="2.30.30.30">
    <property type="match status" value="1"/>
</dbReference>
<dbReference type="HAMAP" id="MF_01326_B">
    <property type="entry name" value="Ribosomal_uL24_B"/>
    <property type="match status" value="1"/>
</dbReference>
<dbReference type="InterPro" id="IPR005824">
    <property type="entry name" value="KOW"/>
</dbReference>
<dbReference type="InterPro" id="IPR014722">
    <property type="entry name" value="Rib_uL2_dom2"/>
</dbReference>
<dbReference type="InterPro" id="IPR003256">
    <property type="entry name" value="Ribosomal_uL24"/>
</dbReference>
<dbReference type="InterPro" id="IPR005825">
    <property type="entry name" value="Ribosomal_uL24_CS"/>
</dbReference>
<dbReference type="InterPro" id="IPR041988">
    <property type="entry name" value="Ribosomal_uL24_KOW"/>
</dbReference>
<dbReference type="InterPro" id="IPR008991">
    <property type="entry name" value="Translation_prot_SH3-like_sf"/>
</dbReference>
<dbReference type="NCBIfam" id="TIGR01079">
    <property type="entry name" value="rplX_bact"/>
    <property type="match status" value="1"/>
</dbReference>
<dbReference type="PANTHER" id="PTHR12903">
    <property type="entry name" value="MITOCHONDRIAL RIBOSOMAL PROTEIN L24"/>
    <property type="match status" value="1"/>
</dbReference>
<dbReference type="Pfam" id="PF00467">
    <property type="entry name" value="KOW"/>
    <property type="match status" value="1"/>
</dbReference>
<dbReference type="Pfam" id="PF17136">
    <property type="entry name" value="ribosomal_L24"/>
    <property type="match status" value="1"/>
</dbReference>
<dbReference type="SMART" id="SM00739">
    <property type="entry name" value="KOW"/>
    <property type="match status" value="1"/>
</dbReference>
<dbReference type="SUPFAM" id="SSF50104">
    <property type="entry name" value="Translation proteins SH3-like domain"/>
    <property type="match status" value="1"/>
</dbReference>
<dbReference type="PROSITE" id="PS01108">
    <property type="entry name" value="RIBOSOMAL_L24"/>
    <property type="match status" value="1"/>
</dbReference>
<gene>
    <name evidence="1" type="primary">rplX</name>
    <name type="ordered locus">ECSE_3584</name>
</gene>
<evidence type="ECO:0000255" key="1">
    <source>
        <dbReference type="HAMAP-Rule" id="MF_01326"/>
    </source>
</evidence>
<evidence type="ECO:0000305" key="2"/>
<keyword id="KW-0687">Ribonucleoprotein</keyword>
<keyword id="KW-0689">Ribosomal protein</keyword>
<keyword id="KW-0694">RNA-binding</keyword>
<keyword id="KW-0699">rRNA-binding</keyword>
<sequence>MAAKIRRDDEVIVLTGKDKGKRGKVKNVLSSGKVIVEGINLVKKHQKPVPALNQPGGIVEKEAAIQVSNVAIFNAATGKADRVGFRFEDGKKVRFFKSNSETIK</sequence>
<feature type="chain" id="PRO_1000141995" description="Large ribosomal subunit protein uL24">
    <location>
        <begin position="1"/>
        <end position="104"/>
    </location>
</feature>
<comment type="function">
    <text evidence="1">One of two assembly initiator proteins, it binds directly to the 5'-end of the 23S rRNA, where it nucleates assembly of the 50S subunit.</text>
</comment>
<comment type="function">
    <text evidence="1">One of the proteins that surrounds the polypeptide exit tunnel on the outside of the subunit.</text>
</comment>
<comment type="subunit">
    <text evidence="1">Part of the 50S ribosomal subunit.</text>
</comment>
<comment type="similarity">
    <text evidence="1">Belongs to the universal ribosomal protein uL24 family.</text>
</comment>
<accession>B6I223</accession>
<name>RL24_ECOSE</name>